<comment type="subcellular location">
    <subcellularLocation>
        <location evidence="1">Nucleus</location>
    </subcellularLocation>
</comment>
<comment type="tissue specificity">
    <text>In flowers. Not found in vegetative tissues.</text>
</comment>
<keyword id="KW-0238">DNA-binding</keyword>
<keyword id="KW-0539">Nucleus</keyword>
<keyword id="KW-0804">Transcription</keyword>
<keyword id="KW-0805">Transcription regulation</keyword>
<name>CMB2_DIACA</name>
<protein>
    <recommendedName>
        <fullName>MADS-box protein CMB2</fullName>
    </recommendedName>
</protein>
<evidence type="ECO:0000255" key="1">
    <source>
        <dbReference type="PROSITE-ProRule" id="PRU00251"/>
    </source>
</evidence>
<evidence type="ECO:0000255" key="2">
    <source>
        <dbReference type="PROSITE-ProRule" id="PRU00629"/>
    </source>
</evidence>
<sequence length="214" mass="24758">MGRGKLEIRKIENKTNRQVTFSKRRNGIMKKAQELTVLCDAKVSLLMISSTHKLHHYLSPGVSLKKMYDEYQKIEGVDLWRKQWERMQEQHRKVLELNSLLRREISRRMGGDLEGLTLVELSALQQEMEEAIIQIRNKKYHTIKNQTGTTRKKIKNLEERHTDLVMELEAKFRGPQFAIGEDDPRNYEAAAAAAVYGNDVAAANLFALSRHPIT</sequence>
<dbReference type="EMBL" id="L40405">
    <property type="protein sequence ID" value="AAB05559.1"/>
    <property type="molecule type" value="mRNA"/>
</dbReference>
<dbReference type="EMBL" id="L40805">
    <property type="protein sequence ID" value="AAA63903.1"/>
    <property type="molecule type" value="Genomic_DNA"/>
</dbReference>
<dbReference type="PIR" id="T10715">
    <property type="entry name" value="T10715"/>
</dbReference>
<dbReference type="SMR" id="Q42498"/>
<dbReference type="GO" id="GO:0005634">
    <property type="term" value="C:nucleus"/>
    <property type="evidence" value="ECO:0007669"/>
    <property type="project" value="UniProtKB-SubCell"/>
</dbReference>
<dbReference type="GO" id="GO:0003700">
    <property type="term" value="F:DNA-binding transcription factor activity"/>
    <property type="evidence" value="ECO:0007669"/>
    <property type="project" value="InterPro"/>
</dbReference>
<dbReference type="GO" id="GO:0046983">
    <property type="term" value="F:protein dimerization activity"/>
    <property type="evidence" value="ECO:0007669"/>
    <property type="project" value="InterPro"/>
</dbReference>
<dbReference type="GO" id="GO:0000977">
    <property type="term" value="F:RNA polymerase II transcription regulatory region sequence-specific DNA binding"/>
    <property type="evidence" value="ECO:0007669"/>
    <property type="project" value="InterPro"/>
</dbReference>
<dbReference type="GO" id="GO:0045944">
    <property type="term" value="P:positive regulation of transcription by RNA polymerase II"/>
    <property type="evidence" value="ECO:0007669"/>
    <property type="project" value="InterPro"/>
</dbReference>
<dbReference type="CDD" id="cd00265">
    <property type="entry name" value="MADS_MEF2_like"/>
    <property type="match status" value="1"/>
</dbReference>
<dbReference type="Gene3D" id="3.40.1810.10">
    <property type="entry name" value="Transcription factor, MADS-box"/>
    <property type="match status" value="1"/>
</dbReference>
<dbReference type="InterPro" id="IPR050142">
    <property type="entry name" value="MADS-box/MEF2_TF"/>
</dbReference>
<dbReference type="InterPro" id="IPR033896">
    <property type="entry name" value="MEF2-like_N"/>
</dbReference>
<dbReference type="InterPro" id="IPR002487">
    <property type="entry name" value="TF_Kbox"/>
</dbReference>
<dbReference type="InterPro" id="IPR002100">
    <property type="entry name" value="TF_MADSbox"/>
</dbReference>
<dbReference type="InterPro" id="IPR036879">
    <property type="entry name" value="TF_MADSbox_sf"/>
</dbReference>
<dbReference type="PANTHER" id="PTHR48019">
    <property type="entry name" value="SERUM RESPONSE FACTOR HOMOLOG"/>
    <property type="match status" value="1"/>
</dbReference>
<dbReference type="Pfam" id="PF01486">
    <property type="entry name" value="K-box"/>
    <property type="match status" value="1"/>
</dbReference>
<dbReference type="Pfam" id="PF00319">
    <property type="entry name" value="SRF-TF"/>
    <property type="match status" value="1"/>
</dbReference>
<dbReference type="PRINTS" id="PR00404">
    <property type="entry name" value="MADSDOMAIN"/>
</dbReference>
<dbReference type="SMART" id="SM00432">
    <property type="entry name" value="MADS"/>
    <property type="match status" value="1"/>
</dbReference>
<dbReference type="SUPFAM" id="SSF55455">
    <property type="entry name" value="SRF-like"/>
    <property type="match status" value="1"/>
</dbReference>
<dbReference type="PROSITE" id="PS51297">
    <property type="entry name" value="K_BOX"/>
    <property type="match status" value="1"/>
</dbReference>
<dbReference type="PROSITE" id="PS00350">
    <property type="entry name" value="MADS_BOX_1"/>
    <property type="match status" value="1"/>
</dbReference>
<dbReference type="PROSITE" id="PS50066">
    <property type="entry name" value="MADS_BOX_2"/>
    <property type="match status" value="1"/>
</dbReference>
<accession>Q42498</accession>
<feature type="chain" id="PRO_0000199493" description="MADS-box protein CMB2">
    <location>
        <begin position="1"/>
        <end position="214"/>
    </location>
</feature>
<feature type="domain" description="MADS-box" evidence="1">
    <location>
        <begin position="3"/>
        <end position="58"/>
    </location>
</feature>
<feature type="domain" description="K-box" evidence="2">
    <location>
        <begin position="84"/>
        <end position="174"/>
    </location>
</feature>
<proteinExistence type="evidence at transcript level"/>
<gene>
    <name type="primary">CMB2</name>
</gene>
<organism>
    <name type="scientific">Dianthus caryophyllus</name>
    <name type="common">Carnation</name>
    <name type="synonym">Clove pink</name>
    <dbReference type="NCBI Taxonomy" id="3570"/>
    <lineage>
        <taxon>Eukaryota</taxon>
        <taxon>Viridiplantae</taxon>
        <taxon>Streptophyta</taxon>
        <taxon>Embryophyta</taxon>
        <taxon>Tracheophyta</taxon>
        <taxon>Spermatophyta</taxon>
        <taxon>Magnoliopsida</taxon>
        <taxon>eudicotyledons</taxon>
        <taxon>Gunneridae</taxon>
        <taxon>Pentapetalae</taxon>
        <taxon>Caryophyllales</taxon>
        <taxon>Caryophyllaceae</taxon>
        <taxon>Caryophylleae</taxon>
        <taxon>Dianthus</taxon>
    </lineage>
</organism>
<reference key="1">
    <citation type="journal article" date="2000" name="Plant Sci.">
        <title>Isolation and characterisation of the carnation floral-specific MADS box gene, CMB2.</title>
        <authorList>
            <person name="Baudinette S.C."/>
            <person name="Stevenson T.W."/>
            <person name="Savin K.W."/>
        </authorList>
    </citation>
    <scope>NUCLEOTIDE SEQUENCE [GENOMIC DNA / MRNA]</scope>
    <source>
        <strain>cv. Scania</strain>
        <tissue>Petal</tissue>
    </source>
</reference>